<comment type="function">
    <text evidence="2">Essential for the assembly of the photosystem I (PSI) complex. May act as a chaperone-like factor to guide the assembly of the PSI subunits.</text>
</comment>
<comment type="subcellular location">
    <subcellularLocation>
        <location evidence="2">Plastid</location>
        <location evidence="2">Chloroplast thylakoid membrane</location>
        <topology evidence="2">Peripheral membrane protein</topology>
    </subcellularLocation>
</comment>
<comment type="RNA editing">
    <location>
        <position position="62" evidence="1"/>
    </location>
</comment>
<comment type="similarity">
    <text evidence="2">Belongs to the Ycf3 family.</text>
</comment>
<dbReference type="EMBL" id="AY522329">
    <property type="status" value="NOT_ANNOTATED_CDS"/>
    <property type="molecule type" value="Genomic_DNA"/>
</dbReference>
<dbReference type="SMR" id="P0C517"/>
<dbReference type="STRING" id="39946.P0C517"/>
<dbReference type="Proteomes" id="UP000007015">
    <property type="component" value="Chloroplast"/>
</dbReference>
<dbReference type="GO" id="GO:0009535">
    <property type="term" value="C:chloroplast thylakoid membrane"/>
    <property type="evidence" value="ECO:0007669"/>
    <property type="project" value="UniProtKB-SubCell"/>
</dbReference>
<dbReference type="GO" id="GO:0009536">
    <property type="term" value="C:plastid"/>
    <property type="evidence" value="ECO:0000305"/>
    <property type="project" value="Gramene"/>
</dbReference>
<dbReference type="GO" id="GO:0015979">
    <property type="term" value="P:photosynthesis"/>
    <property type="evidence" value="ECO:0007669"/>
    <property type="project" value="UniProtKB-UniRule"/>
</dbReference>
<dbReference type="FunFam" id="1.25.40.10:FF:000004">
    <property type="entry name" value="Photosystem I assembly protein Ycf3"/>
    <property type="match status" value="1"/>
</dbReference>
<dbReference type="Gene3D" id="1.25.40.10">
    <property type="entry name" value="Tetratricopeptide repeat domain"/>
    <property type="match status" value="1"/>
</dbReference>
<dbReference type="HAMAP" id="MF_00439">
    <property type="entry name" value="Ycf3"/>
    <property type="match status" value="1"/>
</dbReference>
<dbReference type="InterPro" id="IPR022818">
    <property type="entry name" value="PSI_Ycf3_assembly"/>
</dbReference>
<dbReference type="InterPro" id="IPR011990">
    <property type="entry name" value="TPR-like_helical_dom_sf"/>
</dbReference>
<dbReference type="InterPro" id="IPR019734">
    <property type="entry name" value="TPR_rpt"/>
</dbReference>
<dbReference type="InterPro" id="IPR051685">
    <property type="entry name" value="Ycf3/AcsC/BcsC/TPR_MFPF"/>
</dbReference>
<dbReference type="NCBIfam" id="NF002725">
    <property type="entry name" value="PRK02603.1"/>
    <property type="match status" value="1"/>
</dbReference>
<dbReference type="PANTHER" id="PTHR44943">
    <property type="entry name" value="CELLULOSE SYNTHASE OPERON PROTEIN C"/>
    <property type="match status" value="1"/>
</dbReference>
<dbReference type="PANTHER" id="PTHR44943:SF8">
    <property type="entry name" value="TPR REPEAT-CONTAINING PROTEIN MJ0263"/>
    <property type="match status" value="1"/>
</dbReference>
<dbReference type="Pfam" id="PF00515">
    <property type="entry name" value="TPR_1"/>
    <property type="match status" value="1"/>
</dbReference>
<dbReference type="SMART" id="SM00028">
    <property type="entry name" value="TPR"/>
    <property type="match status" value="3"/>
</dbReference>
<dbReference type="SUPFAM" id="SSF48452">
    <property type="entry name" value="TPR-like"/>
    <property type="match status" value="1"/>
</dbReference>
<dbReference type="PROSITE" id="PS50005">
    <property type="entry name" value="TPR"/>
    <property type="match status" value="3"/>
</dbReference>
<dbReference type="PROSITE" id="PS50293">
    <property type="entry name" value="TPR_REGION"/>
    <property type="match status" value="1"/>
</dbReference>
<accession>P0C517</accession>
<feature type="chain" id="PRO_0000290104" description="Photosystem I assembly protein Ycf3">
    <location>
        <begin position="1"/>
        <end position="170"/>
    </location>
</feature>
<feature type="repeat" description="TPR 1">
    <location>
        <begin position="35"/>
        <end position="68"/>
    </location>
</feature>
<feature type="repeat" description="TPR 2">
    <location>
        <begin position="72"/>
        <end position="105"/>
    </location>
</feature>
<feature type="repeat" description="TPR 3">
    <location>
        <begin position="120"/>
        <end position="153"/>
    </location>
</feature>
<reference key="1">
    <citation type="journal article" date="2004" name="Plant Physiol.">
        <title>A comparison of rice chloroplast genomes.</title>
        <authorList>
            <person name="Tang J."/>
            <person name="Xia H."/>
            <person name="Cao M."/>
            <person name="Zhang X."/>
            <person name="Zeng W."/>
            <person name="Hu S."/>
            <person name="Tong W."/>
            <person name="Wang J."/>
            <person name="Wang J."/>
            <person name="Yu J."/>
            <person name="Yang H."/>
            <person name="Zhu L."/>
        </authorList>
    </citation>
    <scope>NUCLEOTIDE SEQUENCE [LARGE SCALE GENOMIC DNA]</scope>
    <source>
        <strain>cv. 93-11</strain>
    </source>
</reference>
<keyword id="KW-0150">Chloroplast</keyword>
<keyword id="KW-0472">Membrane</keyword>
<keyword id="KW-0602">Photosynthesis</keyword>
<keyword id="KW-0934">Plastid</keyword>
<keyword id="KW-1185">Reference proteome</keyword>
<keyword id="KW-0677">Repeat</keyword>
<keyword id="KW-0691">RNA editing</keyword>
<keyword id="KW-0793">Thylakoid</keyword>
<keyword id="KW-0802">TPR repeat</keyword>
<geneLocation type="chloroplast"/>
<gene>
    <name evidence="2" type="primary">ycf3</name>
</gene>
<proteinExistence type="inferred from homology"/>
<organism>
    <name type="scientific">Oryza sativa subsp. indica</name>
    <name type="common">Rice</name>
    <dbReference type="NCBI Taxonomy" id="39946"/>
    <lineage>
        <taxon>Eukaryota</taxon>
        <taxon>Viridiplantae</taxon>
        <taxon>Streptophyta</taxon>
        <taxon>Embryophyta</taxon>
        <taxon>Tracheophyta</taxon>
        <taxon>Spermatophyta</taxon>
        <taxon>Magnoliopsida</taxon>
        <taxon>Liliopsida</taxon>
        <taxon>Poales</taxon>
        <taxon>Poaceae</taxon>
        <taxon>BOP clade</taxon>
        <taxon>Oryzoideae</taxon>
        <taxon>Oryzeae</taxon>
        <taxon>Oryzinae</taxon>
        <taxon>Oryza</taxon>
        <taxon>Oryza sativa</taxon>
    </lineage>
</organism>
<name>YCF3_ORYSI</name>
<protein>
    <recommendedName>
        <fullName evidence="2">Photosystem I assembly protein Ycf3</fullName>
    </recommendedName>
</protein>
<sequence length="170" mass="19844">MPRSRINGNFIDKTFSIVANILLRIIPTTSGEKRAFTYYRDGMLAQSEGNYAEALQNYYEAMRLEIDPYDRSYILYNIGLIHTSNGEHTKALEYYFRALERNPFLPQAFNNMAVICHYRGEQAILQGDSEIAEAWFDQAAEYWKQAIALTPGNYIEAQNWLKITKRFEFE</sequence>
<evidence type="ECO:0000250" key="1"/>
<evidence type="ECO:0000255" key="2">
    <source>
        <dbReference type="HAMAP-Rule" id="MF_00439"/>
    </source>
</evidence>